<proteinExistence type="inferred from homology"/>
<name>SLD2_NEUCR</name>
<feature type="chain" id="PRO_0000278437" description="DNA replication regulator sld2">
    <location>
        <begin position="1"/>
        <end position="610"/>
    </location>
</feature>
<feature type="region of interest" description="Disordered" evidence="2">
    <location>
        <begin position="28"/>
        <end position="115"/>
    </location>
</feature>
<feature type="region of interest" description="Disordered" evidence="2">
    <location>
        <begin position="127"/>
        <end position="261"/>
    </location>
</feature>
<feature type="region of interest" description="Disordered" evidence="2">
    <location>
        <begin position="338"/>
        <end position="610"/>
    </location>
</feature>
<feature type="compositionally biased region" description="Basic and acidic residues" evidence="2">
    <location>
        <begin position="28"/>
        <end position="42"/>
    </location>
</feature>
<feature type="compositionally biased region" description="Polar residues" evidence="2">
    <location>
        <begin position="86"/>
        <end position="110"/>
    </location>
</feature>
<feature type="compositionally biased region" description="Polar residues" evidence="2">
    <location>
        <begin position="232"/>
        <end position="261"/>
    </location>
</feature>
<feature type="compositionally biased region" description="Acidic residues" evidence="2">
    <location>
        <begin position="373"/>
        <end position="386"/>
    </location>
</feature>
<feature type="compositionally biased region" description="Acidic residues" evidence="2">
    <location>
        <begin position="414"/>
        <end position="428"/>
    </location>
</feature>
<feature type="compositionally biased region" description="Basic residues" evidence="2">
    <location>
        <begin position="442"/>
        <end position="464"/>
    </location>
</feature>
<feature type="compositionally biased region" description="Acidic residues" evidence="2">
    <location>
        <begin position="470"/>
        <end position="480"/>
    </location>
</feature>
<feature type="compositionally biased region" description="Basic and acidic residues" evidence="2">
    <location>
        <begin position="493"/>
        <end position="503"/>
    </location>
</feature>
<feature type="compositionally biased region" description="Acidic residues" evidence="2">
    <location>
        <begin position="514"/>
        <end position="527"/>
    </location>
</feature>
<feature type="compositionally biased region" description="Basic and acidic residues" evidence="2">
    <location>
        <begin position="544"/>
        <end position="573"/>
    </location>
</feature>
<comment type="function">
    <text evidence="1">Has a role in the initiation of DNA replication. Required at S-phase checkpoint (By similarity).</text>
</comment>
<comment type="subcellular location">
    <subcellularLocation>
        <location>Cytoplasm</location>
    </subcellularLocation>
    <subcellularLocation>
        <location evidence="1">Nucleus</location>
    </subcellularLocation>
</comment>
<comment type="similarity">
    <text evidence="3">Belongs to the SLD2 family.</text>
</comment>
<evidence type="ECO:0000250" key="1"/>
<evidence type="ECO:0000256" key="2">
    <source>
        <dbReference type="SAM" id="MobiDB-lite"/>
    </source>
</evidence>
<evidence type="ECO:0000305" key="3"/>
<sequence>MMDEQRKAEYESQSLQLRAELKQFEAEWAQKNDGKKPSREAIKQNPDIAQKYKQYNKLRDILSGKIPPPTKSNNQDPSQRKRKQPETSLPSASTPSKRNRSAATPKSQHYSAVHEAITPDVARKLFSPAVPSSIGPTPQKDGRVLGLFDLISHTPSKSTDETKPRASGFTATPSNRRHALDLENDKDDDDHDEKDGKEFITPSIPRHRNLDRTPSSGRNRNLLDSFLGVRATKTSTPLNKNTGNSPSKNNLTKTPSGERSVSKLQFATPAFLRRTSAPLPPVDENGEWLDIEPLKLPRKPFSIAKGKGLSSVVASLRKMEEEKLDEELDMLREMEAMEQGGMGPPPPKQTVASTSEDTEKKKQVTDPAGAEVVPEEENSFEEDEAALIEVEASFLESPSSKRKKERRPVLLSGFDDENFYDSQDEEDLSKEGLDRNGQPLRVFKKKGQKRTTRKVNMRPTRTKRPSAPIAEEEDDGEEEHNDVIPETQFDATKNLDGDDHHTLDSLSSGGSGSEFDDGSEGEDEEAETSTTKAAKAAAKKKAPSAKEKTKKDATTETKKKKGTKEGGDEEPAKKPRMVKATANANFKRLKLKNNGAKGGPAHNSRFRRRR</sequence>
<protein>
    <recommendedName>
        <fullName>DNA replication regulator sld2</fullName>
    </recommendedName>
    <alternativeName>
        <fullName>DNA replication complex protein 4</fullName>
    </alternativeName>
</protein>
<keyword id="KW-0131">Cell cycle</keyword>
<keyword id="KW-0963">Cytoplasm</keyword>
<keyword id="KW-0235">DNA replication</keyword>
<keyword id="KW-0539">Nucleus</keyword>
<keyword id="KW-1185">Reference proteome</keyword>
<organism>
    <name type="scientific">Neurospora crassa (strain ATCC 24698 / 74-OR23-1A / CBS 708.71 / DSM 1257 / FGSC 987)</name>
    <dbReference type="NCBI Taxonomy" id="367110"/>
    <lineage>
        <taxon>Eukaryota</taxon>
        <taxon>Fungi</taxon>
        <taxon>Dikarya</taxon>
        <taxon>Ascomycota</taxon>
        <taxon>Pezizomycotina</taxon>
        <taxon>Sordariomycetes</taxon>
        <taxon>Sordariomycetidae</taxon>
        <taxon>Sordariales</taxon>
        <taxon>Sordariaceae</taxon>
        <taxon>Neurospora</taxon>
    </lineage>
</organism>
<accession>Q7S438</accession>
<dbReference type="EMBL" id="CM002242">
    <property type="protein sequence ID" value="EAA30264.2"/>
    <property type="molecule type" value="Genomic_DNA"/>
</dbReference>
<dbReference type="RefSeq" id="XP_959500.2">
    <property type="nucleotide sequence ID" value="XM_954407.2"/>
</dbReference>
<dbReference type="SMR" id="Q7S438"/>
<dbReference type="STRING" id="367110.Q7S438"/>
<dbReference type="PaxDb" id="5141-EFNCRP00000003194"/>
<dbReference type="EnsemblFungi" id="EAA30264">
    <property type="protein sequence ID" value="EAA30264"/>
    <property type="gene ID" value="NCU02241"/>
</dbReference>
<dbReference type="GeneID" id="3875649"/>
<dbReference type="KEGG" id="ncr:NCU02241"/>
<dbReference type="VEuPathDB" id="FungiDB:NCU02241"/>
<dbReference type="HOGENOM" id="CLU_033089_0_0_1"/>
<dbReference type="InParanoid" id="Q7S438"/>
<dbReference type="OrthoDB" id="8775810at2759"/>
<dbReference type="Proteomes" id="UP000001805">
    <property type="component" value="Chromosome 7, Linkage Group VII"/>
</dbReference>
<dbReference type="GO" id="GO:0005737">
    <property type="term" value="C:cytoplasm"/>
    <property type="evidence" value="ECO:0007669"/>
    <property type="project" value="UniProtKB-SubCell"/>
</dbReference>
<dbReference type="GO" id="GO:0031261">
    <property type="term" value="C:DNA replication preinitiation complex"/>
    <property type="evidence" value="ECO:0000318"/>
    <property type="project" value="GO_Central"/>
</dbReference>
<dbReference type="GO" id="GO:0003688">
    <property type="term" value="F:DNA replication origin binding"/>
    <property type="evidence" value="ECO:0000318"/>
    <property type="project" value="GO_Central"/>
</dbReference>
<dbReference type="GO" id="GO:0003697">
    <property type="term" value="F:single-stranded DNA binding"/>
    <property type="evidence" value="ECO:0000318"/>
    <property type="project" value="GO_Central"/>
</dbReference>
<dbReference type="GO" id="GO:0006270">
    <property type="term" value="P:DNA replication initiation"/>
    <property type="evidence" value="ECO:0000318"/>
    <property type="project" value="GO_Central"/>
</dbReference>
<dbReference type="GO" id="GO:0000727">
    <property type="term" value="P:double-strand break repair via break-induced replication"/>
    <property type="evidence" value="ECO:0000318"/>
    <property type="project" value="GO_Central"/>
</dbReference>
<dbReference type="GO" id="GO:1902977">
    <property type="term" value="P:mitotic DNA replication preinitiation complex assembly"/>
    <property type="evidence" value="ECO:0000318"/>
    <property type="project" value="GO_Central"/>
</dbReference>
<dbReference type="FunFam" id="1.10.10.1460:FF:000001">
    <property type="entry name" value="DNA replication regulator Sld2"/>
    <property type="match status" value="1"/>
</dbReference>
<dbReference type="Gene3D" id="1.10.10.1460">
    <property type="match status" value="1"/>
</dbReference>
<dbReference type="InterPro" id="IPR021110">
    <property type="entry name" value="DNA_rep_checkpnt_protein"/>
</dbReference>
<dbReference type="InterPro" id="IPR040203">
    <property type="entry name" value="Sld2"/>
</dbReference>
<dbReference type="PANTHER" id="PTHR28124">
    <property type="entry name" value="DNA REPLICATION REGULATOR SLD2"/>
    <property type="match status" value="1"/>
</dbReference>
<dbReference type="PANTHER" id="PTHR28124:SF1">
    <property type="entry name" value="DNA REPLICATION REGULATOR SLD2"/>
    <property type="match status" value="1"/>
</dbReference>
<dbReference type="Pfam" id="PF11719">
    <property type="entry name" value="Drc1-Sld2"/>
    <property type="match status" value="1"/>
</dbReference>
<gene>
    <name type="primary">drc-4</name>
    <name type="synonym">sld2</name>
    <name type="ORF">NCU02241</name>
</gene>
<reference key="1">
    <citation type="journal article" date="2003" name="Nature">
        <title>The genome sequence of the filamentous fungus Neurospora crassa.</title>
        <authorList>
            <person name="Galagan J.E."/>
            <person name="Calvo S.E."/>
            <person name="Borkovich K.A."/>
            <person name="Selker E.U."/>
            <person name="Read N.D."/>
            <person name="Jaffe D.B."/>
            <person name="FitzHugh W."/>
            <person name="Ma L.-J."/>
            <person name="Smirnov S."/>
            <person name="Purcell S."/>
            <person name="Rehman B."/>
            <person name="Elkins T."/>
            <person name="Engels R."/>
            <person name="Wang S."/>
            <person name="Nielsen C.B."/>
            <person name="Butler J."/>
            <person name="Endrizzi M."/>
            <person name="Qui D."/>
            <person name="Ianakiev P."/>
            <person name="Bell-Pedersen D."/>
            <person name="Nelson M.A."/>
            <person name="Werner-Washburne M."/>
            <person name="Selitrennikoff C.P."/>
            <person name="Kinsey J.A."/>
            <person name="Braun E.L."/>
            <person name="Zelter A."/>
            <person name="Schulte U."/>
            <person name="Kothe G.O."/>
            <person name="Jedd G."/>
            <person name="Mewes H.-W."/>
            <person name="Staben C."/>
            <person name="Marcotte E."/>
            <person name="Greenberg D."/>
            <person name="Roy A."/>
            <person name="Foley K."/>
            <person name="Naylor J."/>
            <person name="Stange-Thomann N."/>
            <person name="Barrett R."/>
            <person name="Gnerre S."/>
            <person name="Kamal M."/>
            <person name="Kamvysselis M."/>
            <person name="Mauceli E.W."/>
            <person name="Bielke C."/>
            <person name="Rudd S."/>
            <person name="Frishman D."/>
            <person name="Krystofova S."/>
            <person name="Rasmussen C."/>
            <person name="Metzenberg R.L."/>
            <person name="Perkins D.D."/>
            <person name="Kroken S."/>
            <person name="Cogoni C."/>
            <person name="Macino G."/>
            <person name="Catcheside D.E.A."/>
            <person name="Li W."/>
            <person name="Pratt R.J."/>
            <person name="Osmani S.A."/>
            <person name="DeSouza C.P.C."/>
            <person name="Glass N.L."/>
            <person name="Orbach M.J."/>
            <person name="Berglund J.A."/>
            <person name="Voelker R."/>
            <person name="Yarden O."/>
            <person name="Plamann M."/>
            <person name="Seiler S."/>
            <person name="Dunlap J.C."/>
            <person name="Radford A."/>
            <person name="Aramayo R."/>
            <person name="Natvig D.O."/>
            <person name="Alex L.A."/>
            <person name="Mannhaupt G."/>
            <person name="Ebbole D.J."/>
            <person name="Freitag M."/>
            <person name="Paulsen I."/>
            <person name="Sachs M.S."/>
            <person name="Lander E.S."/>
            <person name="Nusbaum C."/>
            <person name="Birren B.W."/>
        </authorList>
    </citation>
    <scope>NUCLEOTIDE SEQUENCE [LARGE SCALE GENOMIC DNA]</scope>
    <source>
        <strain>ATCC 24698 / 74-OR23-1A / CBS 708.71 / DSM 1257 / FGSC 987</strain>
    </source>
</reference>